<keyword id="KW-0963">Cytoplasm</keyword>
<keyword id="KW-1185">Reference proteome</keyword>
<keyword id="KW-0808">Transferase</keyword>
<keyword id="KW-0819">tRNA processing</keyword>
<feature type="chain" id="PRO_1000122864" description="Sulfurtransferase TusD">
    <location>
        <begin position="1"/>
        <end position="128"/>
    </location>
</feature>
<feature type="active site" description="Cysteine persulfide intermediate" evidence="1">
    <location>
        <position position="78"/>
    </location>
</feature>
<evidence type="ECO:0000255" key="1">
    <source>
        <dbReference type="HAMAP-Rule" id="MF_00390"/>
    </source>
</evidence>
<protein>
    <recommendedName>
        <fullName evidence="1">Sulfurtransferase TusD</fullName>
        <ecNumber evidence="1">2.8.1.-</ecNumber>
    </recommendedName>
    <alternativeName>
        <fullName evidence="1">tRNA 2-thiouridine synthesizing protein D</fullName>
    </alternativeName>
</protein>
<organism>
    <name type="scientific">Erwinia tasmaniensis (strain DSM 17950 / CFBP 7177 / CIP 109463 / NCPPB 4357 / Et1/99)</name>
    <dbReference type="NCBI Taxonomy" id="465817"/>
    <lineage>
        <taxon>Bacteria</taxon>
        <taxon>Pseudomonadati</taxon>
        <taxon>Pseudomonadota</taxon>
        <taxon>Gammaproteobacteria</taxon>
        <taxon>Enterobacterales</taxon>
        <taxon>Erwiniaceae</taxon>
        <taxon>Erwinia</taxon>
    </lineage>
</organism>
<name>TUSD_ERWT9</name>
<sequence length="128" mass="13722">MRFCLMVTGPAYGSQHASSAWLFARELLAQGHSVESVFFYREGVLNASELTAPASDEVDMTRNWQQLHQQHGVALNVCVAAALRRGVSDKQEAANLGLAAANLAEGFQLTGLGALAEAALSCDRLVQF</sequence>
<proteinExistence type="inferred from homology"/>
<gene>
    <name evidence="1" type="primary">tusD</name>
    <name type="ordered locus">ETA_31720</name>
</gene>
<reference key="1">
    <citation type="journal article" date="2008" name="Environ. Microbiol.">
        <title>The genome of Erwinia tasmaniensis strain Et1/99, a non-pathogenic bacterium in the genus Erwinia.</title>
        <authorList>
            <person name="Kube M."/>
            <person name="Migdoll A.M."/>
            <person name="Mueller I."/>
            <person name="Kuhl H."/>
            <person name="Beck A."/>
            <person name="Reinhardt R."/>
            <person name="Geider K."/>
        </authorList>
    </citation>
    <scope>NUCLEOTIDE SEQUENCE [LARGE SCALE GENOMIC DNA]</scope>
    <source>
        <strain>DSM 17950 / CFBP 7177 / CIP 109463 / NCPPB 4357 / Et1/99</strain>
    </source>
</reference>
<accession>B2VK41</accession>
<comment type="function">
    <text evidence="1">Part of a sulfur-relay system required for 2-thiolation of 5-methylaminomethyl-2-thiouridine (mnm(5)s(2)U) at tRNA wobble positions. Accepts sulfur from TusA and transfers it in turn to TusE.</text>
</comment>
<comment type="subunit">
    <text evidence="1">Heterohexamer, formed by a dimer of trimers. The hexameric TusBCD complex contains 2 copies each of TusB, TusC and TusD. The TusBCD complex interacts with TusE.</text>
</comment>
<comment type="subcellular location">
    <subcellularLocation>
        <location evidence="1">Cytoplasm</location>
    </subcellularLocation>
</comment>
<comment type="similarity">
    <text evidence="1">Belongs to the DsrE/TusD family.</text>
</comment>
<dbReference type="EC" id="2.8.1.-" evidence="1"/>
<dbReference type="EMBL" id="CU468135">
    <property type="protein sequence ID" value="CAO98218.1"/>
    <property type="molecule type" value="Genomic_DNA"/>
</dbReference>
<dbReference type="RefSeq" id="WP_012442850.1">
    <property type="nucleotide sequence ID" value="NC_010694.1"/>
</dbReference>
<dbReference type="SMR" id="B2VK41"/>
<dbReference type="STRING" id="465817.ETA_31720"/>
<dbReference type="KEGG" id="eta:ETA_31720"/>
<dbReference type="eggNOG" id="COG1553">
    <property type="taxonomic scope" value="Bacteria"/>
</dbReference>
<dbReference type="HOGENOM" id="CLU_132095_0_0_6"/>
<dbReference type="OrthoDB" id="9787483at2"/>
<dbReference type="Proteomes" id="UP000001726">
    <property type="component" value="Chromosome"/>
</dbReference>
<dbReference type="GO" id="GO:1990228">
    <property type="term" value="C:sulfurtransferase complex"/>
    <property type="evidence" value="ECO:0007669"/>
    <property type="project" value="TreeGrafter"/>
</dbReference>
<dbReference type="GO" id="GO:0097163">
    <property type="term" value="F:sulfur carrier activity"/>
    <property type="evidence" value="ECO:0007669"/>
    <property type="project" value="TreeGrafter"/>
</dbReference>
<dbReference type="GO" id="GO:0016783">
    <property type="term" value="F:sulfurtransferase activity"/>
    <property type="evidence" value="ECO:0007669"/>
    <property type="project" value="UniProtKB-UniRule"/>
</dbReference>
<dbReference type="GO" id="GO:0002143">
    <property type="term" value="P:tRNA wobble position uridine thiolation"/>
    <property type="evidence" value="ECO:0007669"/>
    <property type="project" value="TreeGrafter"/>
</dbReference>
<dbReference type="FunFam" id="3.40.1260.10:FF:000001">
    <property type="entry name" value="Sulfurtransferase TusD"/>
    <property type="match status" value="1"/>
</dbReference>
<dbReference type="Gene3D" id="3.40.1260.10">
    <property type="entry name" value="DsrEFH-like"/>
    <property type="match status" value="1"/>
</dbReference>
<dbReference type="HAMAP" id="MF_00390">
    <property type="entry name" value="Thiourid_synth_D"/>
    <property type="match status" value="1"/>
</dbReference>
<dbReference type="InterPro" id="IPR027396">
    <property type="entry name" value="DsrEFH-like"/>
</dbReference>
<dbReference type="InterPro" id="IPR003787">
    <property type="entry name" value="Sulphur_relay_DsrE/F-like"/>
</dbReference>
<dbReference type="InterPro" id="IPR017463">
    <property type="entry name" value="Sulphur_relay_TusD/DsrE"/>
</dbReference>
<dbReference type="NCBIfam" id="NF001237">
    <property type="entry name" value="PRK00207.1"/>
    <property type="match status" value="1"/>
</dbReference>
<dbReference type="NCBIfam" id="TIGR03012">
    <property type="entry name" value="sulf_tusD_dsrE"/>
    <property type="match status" value="1"/>
</dbReference>
<dbReference type="PANTHER" id="PTHR34874">
    <property type="entry name" value="PROTEIN YCHN"/>
    <property type="match status" value="1"/>
</dbReference>
<dbReference type="PANTHER" id="PTHR34874:SF3">
    <property type="entry name" value="SULFURTRANSFERASE TUSD"/>
    <property type="match status" value="1"/>
</dbReference>
<dbReference type="Pfam" id="PF02635">
    <property type="entry name" value="DsrE"/>
    <property type="match status" value="1"/>
</dbReference>
<dbReference type="SUPFAM" id="SSF75169">
    <property type="entry name" value="DsrEFH-like"/>
    <property type="match status" value="1"/>
</dbReference>